<accession>A6ZSZ4</accession>
<proteinExistence type="inferred from homology"/>
<sequence>MTKSRKQKQKKQDFLRKKLKVGKPKEKARNATDTSFVSKTISIRNQHLDQNPHDLTKRLTLLKHHNINVRKETLTTFQKSIPSIIKSRLMTPLLTQSIPLICDESQQVRQGLIDLVDEIGSHDAEILKLHCNIFVLYINMAMTHIVTQIQADSTKFLSHLLKYCGDEVVRKSWVKLLNGVFGVLGWGQVGKNDSASIVQTKKRNAKYVTIHLNALYTLVEYGCQDERARSDGDTAETTEDSGTLRNPYLIPDYPQPFEHLKLFTRELKVQDATSSGVNATLLSLATQDIDTRKAVFIEQFLPIVRKKIEVIIKEGGECGKSANKLKTLLAKIFD</sequence>
<keyword id="KW-0539">Nucleus</keyword>
<keyword id="KW-0690">Ribosome biogenesis</keyword>
<keyword id="KW-0698">rRNA processing</keyword>
<gene>
    <name type="primary">IPI1</name>
    <name type="ORF">SCY_2478</name>
</gene>
<organism>
    <name type="scientific">Saccharomyces cerevisiae (strain YJM789)</name>
    <name type="common">Baker's yeast</name>
    <dbReference type="NCBI Taxonomy" id="307796"/>
    <lineage>
        <taxon>Eukaryota</taxon>
        <taxon>Fungi</taxon>
        <taxon>Dikarya</taxon>
        <taxon>Ascomycota</taxon>
        <taxon>Saccharomycotina</taxon>
        <taxon>Saccharomycetes</taxon>
        <taxon>Saccharomycetales</taxon>
        <taxon>Saccharomycetaceae</taxon>
        <taxon>Saccharomyces</taxon>
    </lineage>
</organism>
<comment type="function">
    <text evidence="1">Component of the RIX1 complex required for processing of ITS2 sequences from 35S pre-rRNA.</text>
</comment>
<comment type="subunit">
    <text evidence="1">Component of the RIX1 complex, composed of IPI1, RIX1/IPI2 and IPI3 in a 1:2:2 stoichiometry. The complex interacts (via RIX1) with MDN1 (via its hexameric AAA ATPase ring) and the pre-60S ribosome particles.</text>
</comment>
<comment type="subcellular location">
    <subcellularLocation>
        <location evidence="1">Nucleus</location>
    </subcellularLocation>
</comment>
<comment type="similarity">
    <text evidence="3">Belongs to the IPI1/TEX10 family.</text>
</comment>
<feature type="chain" id="PRO_0000308728" description="Pre-rRNA-processing protein IPI1">
    <location>
        <begin position="1"/>
        <end position="334"/>
    </location>
</feature>
<feature type="region of interest" description="Disordered" evidence="2">
    <location>
        <begin position="1"/>
        <end position="32"/>
    </location>
</feature>
<evidence type="ECO:0000250" key="1">
    <source>
        <dbReference type="UniProtKB" id="P38803"/>
    </source>
</evidence>
<evidence type="ECO:0000256" key="2">
    <source>
        <dbReference type="SAM" id="MobiDB-lite"/>
    </source>
</evidence>
<evidence type="ECO:0000305" key="3"/>
<name>IPI1_YEAS7</name>
<protein>
    <recommendedName>
        <fullName>Pre-rRNA-processing protein IPI1</fullName>
    </recommendedName>
    <alternativeName>
        <fullName>Involved in processing IST2 protein 1</fullName>
    </alternativeName>
</protein>
<dbReference type="EMBL" id="AAFW02000082">
    <property type="protein sequence ID" value="EDN62325.1"/>
    <property type="molecule type" value="Genomic_DNA"/>
</dbReference>
<dbReference type="EMDB" id="EMD-10836"/>
<dbReference type="SMR" id="A6ZSZ4"/>
<dbReference type="HOGENOM" id="CLU_050252_2_0_1"/>
<dbReference type="Proteomes" id="UP000007060">
    <property type="component" value="Unassembled WGS sequence"/>
</dbReference>
<dbReference type="GO" id="GO:0005634">
    <property type="term" value="C:nucleus"/>
    <property type="evidence" value="ECO:0007669"/>
    <property type="project" value="UniProtKB-SubCell"/>
</dbReference>
<dbReference type="GO" id="GO:0120330">
    <property type="term" value="C:rixosome complex"/>
    <property type="evidence" value="ECO:0007669"/>
    <property type="project" value="TreeGrafter"/>
</dbReference>
<dbReference type="GO" id="GO:0006364">
    <property type="term" value="P:rRNA processing"/>
    <property type="evidence" value="ECO:0007669"/>
    <property type="project" value="UniProtKB-KW"/>
</dbReference>
<dbReference type="Gene3D" id="1.25.10.10">
    <property type="entry name" value="Leucine-rich Repeat Variant"/>
    <property type="match status" value="1"/>
</dbReference>
<dbReference type="InterPro" id="IPR011989">
    <property type="entry name" value="ARM-like"/>
</dbReference>
<dbReference type="InterPro" id="IPR016024">
    <property type="entry name" value="ARM-type_fold"/>
</dbReference>
<dbReference type="InterPro" id="IPR024679">
    <property type="entry name" value="Ipi1_N"/>
</dbReference>
<dbReference type="PANTHER" id="PTHR16056">
    <property type="entry name" value="REGULATOR OF MICROTUBULE DYNAMICS PROTEIN"/>
    <property type="match status" value="1"/>
</dbReference>
<dbReference type="PANTHER" id="PTHR16056:SF2">
    <property type="entry name" value="TESTIS-EXPRESSED PROTEIN 10"/>
    <property type="match status" value="1"/>
</dbReference>
<dbReference type="Pfam" id="PF12333">
    <property type="entry name" value="Ipi1_N"/>
    <property type="match status" value="1"/>
</dbReference>
<dbReference type="SUPFAM" id="SSF48371">
    <property type="entry name" value="ARM repeat"/>
    <property type="match status" value="1"/>
</dbReference>
<reference key="1">
    <citation type="journal article" date="2007" name="Proc. Natl. Acad. Sci. U.S.A.">
        <title>Genome sequencing and comparative analysis of Saccharomyces cerevisiae strain YJM789.</title>
        <authorList>
            <person name="Wei W."/>
            <person name="McCusker J.H."/>
            <person name="Hyman R.W."/>
            <person name="Jones T."/>
            <person name="Ning Y."/>
            <person name="Cao Z."/>
            <person name="Gu Z."/>
            <person name="Bruno D."/>
            <person name="Miranda M."/>
            <person name="Nguyen M."/>
            <person name="Wilhelmy J."/>
            <person name="Komp C."/>
            <person name="Tamse R."/>
            <person name="Wang X."/>
            <person name="Jia P."/>
            <person name="Luedi P."/>
            <person name="Oefner P.J."/>
            <person name="David L."/>
            <person name="Dietrich F.S."/>
            <person name="Li Y."/>
            <person name="Davis R.W."/>
            <person name="Steinmetz L.M."/>
        </authorList>
    </citation>
    <scope>NUCLEOTIDE SEQUENCE [LARGE SCALE GENOMIC DNA]</scope>
    <source>
        <strain>YJM789</strain>
    </source>
</reference>